<evidence type="ECO:0000250" key="1"/>
<evidence type="ECO:0000250" key="2">
    <source>
        <dbReference type="UniProtKB" id="O35795"/>
    </source>
</evidence>
<evidence type="ECO:0000255" key="3"/>
<evidence type="ECO:0000269" key="4">
    <source>
    </source>
</evidence>
<evidence type="ECO:0000269" key="5">
    <source>
    </source>
</evidence>
<evidence type="ECO:0000303" key="6">
    <source>
    </source>
</evidence>
<evidence type="ECO:0000305" key="7"/>
<protein>
    <recommendedName>
        <fullName>Ectonucleoside triphosphate diphosphohydrolase 7</fullName>
        <shortName>NTPDase 7</shortName>
        <ecNumber evidence="4">3.6.1.15</ecNumber>
    </recommendedName>
    <alternativeName>
        <fullName>Lysosomal apyrase-like protein 1</fullName>
    </alternativeName>
</protein>
<gene>
    <name type="primary">ENTPD7</name>
    <name evidence="6" type="synonym">LALP1</name>
</gene>
<proteinExistence type="evidence at protein level"/>
<dbReference type="EC" id="3.6.1.15" evidence="4"/>
<dbReference type="EMBL" id="AF269255">
    <property type="protein sequence ID" value="AAF90135.1"/>
    <property type="molecule type" value="mRNA"/>
</dbReference>
<dbReference type="EMBL" id="AK055540">
    <property type="protein sequence ID" value="BAG51533.1"/>
    <property type="molecule type" value="mRNA"/>
</dbReference>
<dbReference type="EMBL" id="AK314542">
    <property type="protein sequence ID" value="BAG37130.1"/>
    <property type="molecule type" value="mRNA"/>
</dbReference>
<dbReference type="EMBL" id="AL133353">
    <property type="status" value="NOT_ANNOTATED_CDS"/>
    <property type="molecule type" value="Genomic_DNA"/>
</dbReference>
<dbReference type="EMBL" id="CH471066">
    <property type="protein sequence ID" value="EAW49861.1"/>
    <property type="molecule type" value="Genomic_DNA"/>
</dbReference>
<dbReference type="EMBL" id="BC119008">
    <property type="protein sequence ID" value="AAI19009.1"/>
    <property type="molecule type" value="mRNA"/>
</dbReference>
<dbReference type="EMBL" id="BC122857">
    <property type="protein sequence ID" value="AAI22858.1"/>
    <property type="molecule type" value="mRNA"/>
</dbReference>
<dbReference type="CCDS" id="CCDS7480.1"/>
<dbReference type="RefSeq" id="NP_001336892.1">
    <property type="nucleotide sequence ID" value="NM_001349963.2"/>
</dbReference>
<dbReference type="RefSeq" id="NP_065087.1">
    <property type="nucleotide sequence ID" value="NM_020354.5"/>
</dbReference>
<dbReference type="SMR" id="Q9NQZ7"/>
<dbReference type="BioGRID" id="121358">
    <property type="interactions" value="54"/>
</dbReference>
<dbReference type="FunCoup" id="Q9NQZ7">
    <property type="interactions" value="592"/>
</dbReference>
<dbReference type="IntAct" id="Q9NQZ7">
    <property type="interactions" value="46"/>
</dbReference>
<dbReference type="STRING" id="9606.ENSP00000359520"/>
<dbReference type="GlyCosmos" id="Q9NQZ7">
    <property type="glycosylation" value="2 sites, 1 glycan"/>
</dbReference>
<dbReference type="GlyGen" id="Q9NQZ7">
    <property type="glycosylation" value="2 sites, 1 N-linked glycan (1 site), 1 O-linked glycan (1 site)"/>
</dbReference>
<dbReference type="iPTMnet" id="Q9NQZ7"/>
<dbReference type="PhosphoSitePlus" id="Q9NQZ7"/>
<dbReference type="BioMuta" id="ENTPD7"/>
<dbReference type="DMDM" id="74752912"/>
<dbReference type="jPOST" id="Q9NQZ7"/>
<dbReference type="MassIVE" id="Q9NQZ7"/>
<dbReference type="PaxDb" id="9606-ENSP00000359520"/>
<dbReference type="PeptideAtlas" id="Q9NQZ7"/>
<dbReference type="ProteomicsDB" id="82238"/>
<dbReference type="Antibodypedia" id="3066">
    <property type="antibodies" value="93 antibodies from 21 providers"/>
</dbReference>
<dbReference type="DNASU" id="57089"/>
<dbReference type="Ensembl" id="ENST00000370489.5">
    <property type="protein sequence ID" value="ENSP00000359520.4"/>
    <property type="gene ID" value="ENSG00000198018.7"/>
</dbReference>
<dbReference type="GeneID" id="57089"/>
<dbReference type="KEGG" id="hsa:57089"/>
<dbReference type="MANE-Select" id="ENST00000370489.5">
    <property type="protein sequence ID" value="ENSP00000359520.4"/>
    <property type="RefSeq nucleotide sequence ID" value="NM_020354.5"/>
    <property type="RefSeq protein sequence ID" value="NP_065087.1"/>
</dbReference>
<dbReference type="UCSC" id="uc001kqa.5">
    <property type="organism name" value="human"/>
</dbReference>
<dbReference type="AGR" id="HGNC:19745"/>
<dbReference type="CTD" id="57089"/>
<dbReference type="DisGeNET" id="57089"/>
<dbReference type="GeneCards" id="ENTPD7"/>
<dbReference type="HGNC" id="HGNC:19745">
    <property type="gene designation" value="ENTPD7"/>
</dbReference>
<dbReference type="HPA" id="ENSG00000198018">
    <property type="expression patterns" value="Tissue enhanced (intestine)"/>
</dbReference>
<dbReference type="MIM" id="616753">
    <property type="type" value="gene"/>
</dbReference>
<dbReference type="neXtProt" id="NX_Q9NQZ7"/>
<dbReference type="OpenTargets" id="ENSG00000198018"/>
<dbReference type="PharmGKB" id="PA134993462"/>
<dbReference type="VEuPathDB" id="HostDB:ENSG00000198018"/>
<dbReference type="eggNOG" id="KOG1386">
    <property type="taxonomic scope" value="Eukaryota"/>
</dbReference>
<dbReference type="GeneTree" id="ENSGT01110000267240"/>
<dbReference type="HOGENOM" id="CLU_010246_6_0_1"/>
<dbReference type="InParanoid" id="Q9NQZ7"/>
<dbReference type="OMA" id="HESIGFM"/>
<dbReference type="OrthoDB" id="6372431at2759"/>
<dbReference type="PAN-GO" id="Q9NQZ7">
    <property type="GO annotations" value="5 GO annotations based on evolutionary models"/>
</dbReference>
<dbReference type="PhylomeDB" id="Q9NQZ7"/>
<dbReference type="TreeFam" id="TF354343"/>
<dbReference type="BRENDA" id="3.6.1.5">
    <property type="organism ID" value="2681"/>
</dbReference>
<dbReference type="PathwayCommons" id="Q9NQZ7"/>
<dbReference type="Reactome" id="R-HSA-8850843">
    <property type="pathway name" value="Phosphate bond hydrolysis by NTPDase proteins"/>
</dbReference>
<dbReference type="SignaLink" id="Q9NQZ7"/>
<dbReference type="BioGRID-ORCS" id="57089">
    <property type="hits" value="23 hits in 1162 CRISPR screens"/>
</dbReference>
<dbReference type="ChiTaRS" id="ENTPD7">
    <property type="organism name" value="human"/>
</dbReference>
<dbReference type="GenomeRNAi" id="57089"/>
<dbReference type="Pharos" id="Q9NQZ7">
    <property type="development level" value="Tbio"/>
</dbReference>
<dbReference type="PRO" id="PR:Q9NQZ7"/>
<dbReference type="Proteomes" id="UP000005640">
    <property type="component" value="Chromosome 10"/>
</dbReference>
<dbReference type="RNAct" id="Q9NQZ7">
    <property type="molecule type" value="protein"/>
</dbReference>
<dbReference type="Bgee" id="ENSG00000198018">
    <property type="expression patterns" value="Expressed in jejunal mucosa and 143 other cell types or tissues"/>
</dbReference>
<dbReference type="ExpressionAtlas" id="Q9NQZ7">
    <property type="expression patterns" value="baseline and differential"/>
</dbReference>
<dbReference type="GO" id="GO:0030659">
    <property type="term" value="C:cytoplasmic vesicle membrane"/>
    <property type="evidence" value="ECO:0000314"/>
    <property type="project" value="UniProtKB"/>
</dbReference>
<dbReference type="GO" id="GO:0030666">
    <property type="term" value="C:endocytic vesicle membrane"/>
    <property type="evidence" value="ECO:0000304"/>
    <property type="project" value="Reactome"/>
</dbReference>
<dbReference type="GO" id="GO:0005794">
    <property type="term" value="C:Golgi apparatus"/>
    <property type="evidence" value="ECO:0000318"/>
    <property type="project" value="GO_Central"/>
</dbReference>
<dbReference type="GO" id="GO:0016020">
    <property type="term" value="C:membrane"/>
    <property type="evidence" value="ECO:0000318"/>
    <property type="project" value="GO_Central"/>
</dbReference>
<dbReference type="GO" id="GO:0043273">
    <property type="term" value="F:CTPase activity"/>
    <property type="evidence" value="ECO:0000314"/>
    <property type="project" value="UniProtKB"/>
</dbReference>
<dbReference type="GO" id="GO:0004382">
    <property type="term" value="F:GDP phosphatase activity"/>
    <property type="evidence" value="ECO:0000318"/>
    <property type="project" value="GO_Central"/>
</dbReference>
<dbReference type="GO" id="GO:0003924">
    <property type="term" value="F:GTPase activity"/>
    <property type="evidence" value="ECO:0000314"/>
    <property type="project" value="UniProtKB"/>
</dbReference>
<dbReference type="GO" id="GO:0046872">
    <property type="term" value="F:metal ion binding"/>
    <property type="evidence" value="ECO:0007669"/>
    <property type="project" value="UniProtKB-KW"/>
</dbReference>
<dbReference type="GO" id="GO:0017111">
    <property type="term" value="F:ribonucleoside triphosphate phosphatase activity"/>
    <property type="evidence" value="ECO:0000314"/>
    <property type="project" value="UniProtKB"/>
</dbReference>
<dbReference type="GO" id="GO:0045134">
    <property type="term" value="F:UDP phosphatase activity"/>
    <property type="evidence" value="ECO:0000318"/>
    <property type="project" value="GO_Central"/>
</dbReference>
<dbReference type="GO" id="GO:0006254">
    <property type="term" value="P:CTP catabolic process"/>
    <property type="evidence" value="ECO:0000314"/>
    <property type="project" value="UniProtKB"/>
</dbReference>
<dbReference type="GO" id="GO:0046036">
    <property type="term" value="P:CTP metabolic process"/>
    <property type="evidence" value="ECO:0000318"/>
    <property type="project" value="GO_Central"/>
</dbReference>
<dbReference type="GO" id="GO:0046039">
    <property type="term" value="P:GTP metabolic process"/>
    <property type="evidence" value="ECO:0000314"/>
    <property type="project" value="UniProtKB"/>
</dbReference>
<dbReference type="GO" id="GO:0034656">
    <property type="term" value="P:nucleobase-containing small molecule catabolic process"/>
    <property type="evidence" value="ECO:0000314"/>
    <property type="project" value="UniProtKB"/>
</dbReference>
<dbReference type="GO" id="GO:0050776">
    <property type="term" value="P:regulation of immune response"/>
    <property type="evidence" value="ECO:0007669"/>
    <property type="project" value="Ensembl"/>
</dbReference>
<dbReference type="GO" id="GO:0072539">
    <property type="term" value="P:T-helper 17 cell differentiation"/>
    <property type="evidence" value="ECO:0007669"/>
    <property type="project" value="Ensembl"/>
</dbReference>
<dbReference type="GO" id="GO:0006256">
    <property type="term" value="P:UDP catabolic process"/>
    <property type="evidence" value="ECO:0000318"/>
    <property type="project" value="GO_Central"/>
</dbReference>
<dbReference type="GO" id="GO:0046052">
    <property type="term" value="P:UTP catabolic process"/>
    <property type="evidence" value="ECO:0000314"/>
    <property type="project" value="UniProtKB"/>
</dbReference>
<dbReference type="CDD" id="cd24045">
    <property type="entry name" value="ASKHA_NBD_NTPDase4-like"/>
    <property type="match status" value="1"/>
</dbReference>
<dbReference type="FunFam" id="3.30.420.40:FF:000057">
    <property type="entry name" value="Ectonucleoside triphosphate diphosphohydrolase 4"/>
    <property type="match status" value="1"/>
</dbReference>
<dbReference type="FunFam" id="3.30.420.150:FF:000003">
    <property type="entry name" value="ectonucleoside triphosphate diphosphohydrolase 7"/>
    <property type="match status" value="1"/>
</dbReference>
<dbReference type="Gene3D" id="3.30.420.40">
    <property type="match status" value="1"/>
</dbReference>
<dbReference type="Gene3D" id="3.30.420.150">
    <property type="entry name" value="Exopolyphosphatase. Domain 2"/>
    <property type="match status" value="1"/>
</dbReference>
<dbReference type="InterPro" id="IPR000407">
    <property type="entry name" value="GDA1_CD39_NTPase"/>
</dbReference>
<dbReference type="PANTHER" id="PTHR11782">
    <property type="entry name" value="ADENOSINE/GUANOSINE DIPHOSPHATASE"/>
    <property type="match status" value="1"/>
</dbReference>
<dbReference type="PANTHER" id="PTHR11782:SF37">
    <property type="entry name" value="ECTONUCLEOSIDE TRIPHOSPHATE DIPHOSPHOHYDROLASE 7"/>
    <property type="match status" value="1"/>
</dbReference>
<dbReference type="Pfam" id="PF01150">
    <property type="entry name" value="GDA1_CD39"/>
    <property type="match status" value="1"/>
</dbReference>
<dbReference type="PROSITE" id="PS01238">
    <property type="entry name" value="GDA1_CD39_NTPASE"/>
    <property type="match status" value="1"/>
</dbReference>
<keyword id="KW-0106">Calcium</keyword>
<keyword id="KW-0968">Cytoplasmic vesicle</keyword>
<keyword id="KW-1015">Disulfide bond</keyword>
<keyword id="KW-0325">Glycoprotein</keyword>
<keyword id="KW-0378">Hydrolase</keyword>
<keyword id="KW-0460">Magnesium</keyword>
<keyword id="KW-0472">Membrane</keyword>
<keyword id="KW-0479">Metal-binding</keyword>
<keyword id="KW-1267">Proteomics identification</keyword>
<keyword id="KW-1185">Reference proteome</keyword>
<keyword id="KW-0812">Transmembrane</keyword>
<keyword id="KW-1133">Transmembrane helix</keyword>
<comment type="function">
    <text evidence="4">Catalyzes the hydrolysis of nucleoside triphosphates and diphosphates in a calcium- or magnesium-dependent manner. Preferentially hydrolyzes nucleoside 5'-triphosphates, with substrate preference for UTP &gt; GTP &gt; CTP. Hydrolyzes ATP and nucleoside diphosphates only to a minor extent.</text>
</comment>
<comment type="catalytic activity">
    <reaction evidence="4">
        <text>a ribonucleoside 5'-triphosphate + H2O = a ribonucleoside 5'-diphosphate + phosphate + H(+)</text>
        <dbReference type="Rhea" id="RHEA:23680"/>
        <dbReference type="ChEBI" id="CHEBI:15377"/>
        <dbReference type="ChEBI" id="CHEBI:15378"/>
        <dbReference type="ChEBI" id="CHEBI:43474"/>
        <dbReference type="ChEBI" id="CHEBI:57930"/>
        <dbReference type="ChEBI" id="CHEBI:61557"/>
        <dbReference type="EC" id="3.6.1.15"/>
    </reaction>
</comment>
<comment type="catalytic activity">
    <reaction evidence="4">
        <text>UTP + H2O = UDP + phosphate + H(+)</text>
        <dbReference type="Rhea" id="RHEA:64900"/>
        <dbReference type="ChEBI" id="CHEBI:15377"/>
        <dbReference type="ChEBI" id="CHEBI:15378"/>
        <dbReference type="ChEBI" id="CHEBI:43474"/>
        <dbReference type="ChEBI" id="CHEBI:46398"/>
        <dbReference type="ChEBI" id="CHEBI:58223"/>
    </reaction>
</comment>
<comment type="catalytic activity">
    <reaction evidence="4">
        <text>GTP + H2O = GDP + phosphate + H(+)</text>
        <dbReference type="Rhea" id="RHEA:19669"/>
        <dbReference type="ChEBI" id="CHEBI:15377"/>
        <dbReference type="ChEBI" id="CHEBI:15378"/>
        <dbReference type="ChEBI" id="CHEBI:37565"/>
        <dbReference type="ChEBI" id="CHEBI:43474"/>
        <dbReference type="ChEBI" id="CHEBI:58189"/>
    </reaction>
</comment>
<comment type="catalytic activity">
    <reaction evidence="4">
        <text>CTP + H2O = CDP + phosphate + H(+)</text>
        <dbReference type="Rhea" id="RHEA:29387"/>
        <dbReference type="ChEBI" id="CHEBI:15377"/>
        <dbReference type="ChEBI" id="CHEBI:15378"/>
        <dbReference type="ChEBI" id="CHEBI:37563"/>
        <dbReference type="ChEBI" id="CHEBI:43474"/>
        <dbReference type="ChEBI" id="CHEBI:58069"/>
    </reaction>
</comment>
<comment type="cofactor">
    <cofactor evidence="4">
        <name>Ca(2+)</name>
        <dbReference type="ChEBI" id="CHEBI:29108"/>
    </cofactor>
    <cofactor evidence="4">
        <name>Mg(2+)</name>
        <dbReference type="ChEBI" id="CHEBI:18420"/>
    </cofactor>
</comment>
<comment type="subcellular location">
    <subcellularLocation>
        <location evidence="4">Cytoplasmic vesicle membrane</location>
        <topology evidence="3">Multi-pass membrane protein</topology>
    </subcellularLocation>
</comment>
<comment type="similarity">
    <text evidence="7">Belongs to the GDA1/CD39 NTPase family.</text>
</comment>
<sequence length="604" mass="68960">MARISFSYLCPASWYFTVPTVSPFLRQRVAFLGLFFISCLLLLMLIIDFRHWSASLPRDRQYERYLARVGELEATDTEDPNLNYGLVVDCGSSGSRIFVYFWPRHNGNPHDLLDIKQMRDRNSQPVVKKIKPGISAMADTPEHASDYLRPLLSFAAAHVPVKKHKETPLYILCTAGMRLLPERKQLAILADLVKDLPLEFDFLFSQSQAEVISGKQEGVYAWIGINFVLGRFDHEDESDAEATQELAAGRRRTVGILDMGGASLQIAYEVPTSTSVLPAKQEEAAKILLAEFNLGCDVQHTEHVYRVYVTTFLGFGGNFARQRYEDLVLNETLNKNRLLGQKTGLSPDNPFLDPCLPVGLTDVVERNSQVLHVRGRGDWVSCGAMLSPLLARSNTSQASLNGIYQSPIDFNNSEFYGFSEFFYCTEDVLRIGGRYHGPTFAKAAQDYCGMAWSVLTQRFKNGLFSSHADEHRLKYQCFKSAWMYQVLHEGFHFPYDYPNLRTAQLVYDREVQWTLGAILYKTRFLPLRDLRQEGVRQAHGSWFRLSFVYNHYLFFACILVVLLAIFLYLLRLRRIHHRQTRASAPLDLLWLEEVVPMMGVQVGP</sequence>
<organism>
    <name type="scientific">Homo sapiens</name>
    <name type="common">Human</name>
    <dbReference type="NCBI Taxonomy" id="9606"/>
    <lineage>
        <taxon>Eukaryota</taxon>
        <taxon>Metazoa</taxon>
        <taxon>Chordata</taxon>
        <taxon>Craniata</taxon>
        <taxon>Vertebrata</taxon>
        <taxon>Euteleostomi</taxon>
        <taxon>Mammalia</taxon>
        <taxon>Eutheria</taxon>
        <taxon>Euarchontoglires</taxon>
        <taxon>Primates</taxon>
        <taxon>Haplorrhini</taxon>
        <taxon>Catarrhini</taxon>
        <taxon>Hominidae</taxon>
        <taxon>Homo</taxon>
    </lineage>
</organism>
<accession>Q9NQZ7</accession>
<accession>B2RB83</accession>
<accession>B3KP21</accession>
<accession>D3DR64</accession>
<reference key="1">
    <citation type="journal article" date="2001" name="J. Biol. Chem.">
        <title>Molecular cloning and characterization of a novel mammalian endo-apyrase (LALP1).</title>
        <authorList>
            <person name="Shi J.-D."/>
            <person name="Kukar T."/>
            <person name="Wang C.-Y."/>
            <person name="Li Q.-Z."/>
            <person name="Cruz P.E."/>
            <person name="Davoodi-Semiromi A."/>
            <person name="Yang P."/>
            <person name="Gu Y."/>
            <person name="Lian W."/>
            <person name="Wu D.H."/>
            <person name="She J.-X."/>
        </authorList>
    </citation>
    <scope>NUCLEOTIDE SEQUENCE [MRNA]</scope>
    <scope>ENZYME ACTIVITY</scope>
    <scope>FUNCTION</scope>
    <scope>COFACTOR</scope>
    <scope>SUBCELLULAR LOCATION</scope>
</reference>
<reference key="2">
    <citation type="journal article" date="2004" name="Nat. Genet.">
        <title>Complete sequencing and characterization of 21,243 full-length human cDNAs.</title>
        <authorList>
            <person name="Ota T."/>
            <person name="Suzuki Y."/>
            <person name="Nishikawa T."/>
            <person name="Otsuki T."/>
            <person name="Sugiyama T."/>
            <person name="Irie R."/>
            <person name="Wakamatsu A."/>
            <person name="Hayashi K."/>
            <person name="Sato H."/>
            <person name="Nagai K."/>
            <person name="Kimura K."/>
            <person name="Makita H."/>
            <person name="Sekine M."/>
            <person name="Obayashi M."/>
            <person name="Nishi T."/>
            <person name="Shibahara T."/>
            <person name="Tanaka T."/>
            <person name="Ishii S."/>
            <person name="Yamamoto J."/>
            <person name="Saito K."/>
            <person name="Kawai Y."/>
            <person name="Isono Y."/>
            <person name="Nakamura Y."/>
            <person name="Nagahari K."/>
            <person name="Murakami K."/>
            <person name="Yasuda T."/>
            <person name="Iwayanagi T."/>
            <person name="Wagatsuma M."/>
            <person name="Shiratori A."/>
            <person name="Sudo H."/>
            <person name="Hosoiri T."/>
            <person name="Kaku Y."/>
            <person name="Kodaira H."/>
            <person name="Kondo H."/>
            <person name="Sugawara M."/>
            <person name="Takahashi M."/>
            <person name="Kanda K."/>
            <person name="Yokoi T."/>
            <person name="Furuya T."/>
            <person name="Kikkawa E."/>
            <person name="Omura Y."/>
            <person name="Abe K."/>
            <person name="Kamihara K."/>
            <person name="Katsuta N."/>
            <person name="Sato K."/>
            <person name="Tanikawa M."/>
            <person name="Yamazaki M."/>
            <person name="Ninomiya K."/>
            <person name="Ishibashi T."/>
            <person name="Yamashita H."/>
            <person name="Murakawa K."/>
            <person name="Fujimori K."/>
            <person name="Tanai H."/>
            <person name="Kimata M."/>
            <person name="Watanabe M."/>
            <person name="Hiraoka S."/>
            <person name="Chiba Y."/>
            <person name="Ishida S."/>
            <person name="Ono Y."/>
            <person name="Takiguchi S."/>
            <person name="Watanabe S."/>
            <person name="Yosida M."/>
            <person name="Hotuta T."/>
            <person name="Kusano J."/>
            <person name="Kanehori K."/>
            <person name="Takahashi-Fujii A."/>
            <person name="Hara H."/>
            <person name="Tanase T.-O."/>
            <person name="Nomura Y."/>
            <person name="Togiya S."/>
            <person name="Komai F."/>
            <person name="Hara R."/>
            <person name="Takeuchi K."/>
            <person name="Arita M."/>
            <person name="Imose N."/>
            <person name="Musashino K."/>
            <person name="Yuuki H."/>
            <person name="Oshima A."/>
            <person name="Sasaki N."/>
            <person name="Aotsuka S."/>
            <person name="Yoshikawa Y."/>
            <person name="Matsunawa H."/>
            <person name="Ichihara T."/>
            <person name="Shiohata N."/>
            <person name="Sano S."/>
            <person name="Moriya S."/>
            <person name="Momiyama H."/>
            <person name="Satoh N."/>
            <person name="Takami S."/>
            <person name="Terashima Y."/>
            <person name="Suzuki O."/>
            <person name="Nakagawa S."/>
            <person name="Senoh A."/>
            <person name="Mizoguchi H."/>
            <person name="Goto Y."/>
            <person name="Shimizu F."/>
            <person name="Wakebe H."/>
            <person name="Hishigaki H."/>
            <person name="Watanabe T."/>
            <person name="Sugiyama A."/>
            <person name="Takemoto M."/>
            <person name="Kawakami B."/>
            <person name="Yamazaki M."/>
            <person name="Watanabe K."/>
            <person name="Kumagai A."/>
            <person name="Itakura S."/>
            <person name="Fukuzumi Y."/>
            <person name="Fujimori Y."/>
            <person name="Komiyama M."/>
            <person name="Tashiro H."/>
            <person name="Tanigami A."/>
            <person name="Fujiwara T."/>
            <person name="Ono T."/>
            <person name="Yamada K."/>
            <person name="Fujii Y."/>
            <person name="Ozaki K."/>
            <person name="Hirao M."/>
            <person name="Ohmori Y."/>
            <person name="Kawabata A."/>
            <person name="Hikiji T."/>
            <person name="Kobatake N."/>
            <person name="Inagaki H."/>
            <person name="Ikema Y."/>
            <person name="Okamoto S."/>
            <person name="Okitani R."/>
            <person name="Kawakami T."/>
            <person name="Noguchi S."/>
            <person name="Itoh T."/>
            <person name="Shigeta K."/>
            <person name="Senba T."/>
            <person name="Matsumura K."/>
            <person name="Nakajima Y."/>
            <person name="Mizuno T."/>
            <person name="Morinaga M."/>
            <person name="Sasaki M."/>
            <person name="Togashi T."/>
            <person name="Oyama M."/>
            <person name="Hata H."/>
            <person name="Watanabe M."/>
            <person name="Komatsu T."/>
            <person name="Mizushima-Sugano J."/>
            <person name="Satoh T."/>
            <person name="Shirai Y."/>
            <person name="Takahashi Y."/>
            <person name="Nakagawa K."/>
            <person name="Okumura K."/>
            <person name="Nagase T."/>
            <person name="Nomura N."/>
            <person name="Kikuchi H."/>
            <person name="Masuho Y."/>
            <person name="Yamashita R."/>
            <person name="Nakai K."/>
            <person name="Yada T."/>
            <person name="Nakamura Y."/>
            <person name="Ohara O."/>
            <person name="Isogai T."/>
            <person name="Sugano S."/>
        </authorList>
    </citation>
    <scope>NUCLEOTIDE SEQUENCE [LARGE SCALE MRNA]</scope>
    <scope>VARIANT ALA-276</scope>
    <source>
        <tissue>Brain</tissue>
    </source>
</reference>
<reference key="3">
    <citation type="journal article" date="2004" name="Nature">
        <title>The DNA sequence and comparative analysis of human chromosome 10.</title>
        <authorList>
            <person name="Deloukas P."/>
            <person name="Earthrowl M.E."/>
            <person name="Grafham D.V."/>
            <person name="Rubenfield M."/>
            <person name="French L."/>
            <person name="Steward C.A."/>
            <person name="Sims S.K."/>
            <person name="Jones M.C."/>
            <person name="Searle S."/>
            <person name="Scott C."/>
            <person name="Howe K."/>
            <person name="Hunt S.E."/>
            <person name="Andrews T.D."/>
            <person name="Gilbert J.G.R."/>
            <person name="Swarbreck D."/>
            <person name="Ashurst J.L."/>
            <person name="Taylor A."/>
            <person name="Battles J."/>
            <person name="Bird C.P."/>
            <person name="Ainscough R."/>
            <person name="Almeida J.P."/>
            <person name="Ashwell R.I.S."/>
            <person name="Ambrose K.D."/>
            <person name="Babbage A.K."/>
            <person name="Bagguley C.L."/>
            <person name="Bailey J."/>
            <person name="Banerjee R."/>
            <person name="Bates K."/>
            <person name="Beasley H."/>
            <person name="Bray-Allen S."/>
            <person name="Brown A.J."/>
            <person name="Brown J.Y."/>
            <person name="Burford D.C."/>
            <person name="Burrill W."/>
            <person name="Burton J."/>
            <person name="Cahill P."/>
            <person name="Camire D."/>
            <person name="Carter N.P."/>
            <person name="Chapman J.C."/>
            <person name="Clark S.Y."/>
            <person name="Clarke G."/>
            <person name="Clee C.M."/>
            <person name="Clegg S."/>
            <person name="Corby N."/>
            <person name="Coulson A."/>
            <person name="Dhami P."/>
            <person name="Dutta I."/>
            <person name="Dunn M."/>
            <person name="Faulkner L."/>
            <person name="Frankish A."/>
            <person name="Frankland J.A."/>
            <person name="Garner P."/>
            <person name="Garnett J."/>
            <person name="Gribble S."/>
            <person name="Griffiths C."/>
            <person name="Grocock R."/>
            <person name="Gustafson E."/>
            <person name="Hammond S."/>
            <person name="Harley J.L."/>
            <person name="Hart E."/>
            <person name="Heath P.D."/>
            <person name="Ho T.P."/>
            <person name="Hopkins B."/>
            <person name="Horne J."/>
            <person name="Howden P.J."/>
            <person name="Huckle E."/>
            <person name="Hynds C."/>
            <person name="Johnson C."/>
            <person name="Johnson D."/>
            <person name="Kana A."/>
            <person name="Kay M."/>
            <person name="Kimberley A.M."/>
            <person name="Kershaw J.K."/>
            <person name="Kokkinaki M."/>
            <person name="Laird G.K."/>
            <person name="Lawlor S."/>
            <person name="Lee H.M."/>
            <person name="Leongamornlert D.A."/>
            <person name="Laird G."/>
            <person name="Lloyd C."/>
            <person name="Lloyd D.M."/>
            <person name="Loveland J."/>
            <person name="Lovell J."/>
            <person name="McLaren S."/>
            <person name="McLay K.E."/>
            <person name="McMurray A."/>
            <person name="Mashreghi-Mohammadi M."/>
            <person name="Matthews L."/>
            <person name="Milne S."/>
            <person name="Nickerson T."/>
            <person name="Nguyen M."/>
            <person name="Overton-Larty E."/>
            <person name="Palmer S.A."/>
            <person name="Pearce A.V."/>
            <person name="Peck A.I."/>
            <person name="Pelan S."/>
            <person name="Phillimore B."/>
            <person name="Porter K."/>
            <person name="Rice C.M."/>
            <person name="Rogosin A."/>
            <person name="Ross M.T."/>
            <person name="Sarafidou T."/>
            <person name="Sehra H.K."/>
            <person name="Shownkeen R."/>
            <person name="Skuce C.D."/>
            <person name="Smith M."/>
            <person name="Standring L."/>
            <person name="Sycamore N."/>
            <person name="Tester J."/>
            <person name="Thorpe A."/>
            <person name="Torcasso W."/>
            <person name="Tracey A."/>
            <person name="Tromans A."/>
            <person name="Tsolas J."/>
            <person name="Wall M."/>
            <person name="Walsh J."/>
            <person name="Wang H."/>
            <person name="Weinstock K."/>
            <person name="West A.P."/>
            <person name="Willey D.L."/>
            <person name="Whitehead S.L."/>
            <person name="Wilming L."/>
            <person name="Wray P.W."/>
            <person name="Young L."/>
            <person name="Chen Y."/>
            <person name="Lovering R.C."/>
            <person name="Moschonas N.K."/>
            <person name="Siebert R."/>
            <person name="Fechtel K."/>
            <person name="Bentley D."/>
            <person name="Durbin R.M."/>
            <person name="Hubbard T."/>
            <person name="Doucette-Stamm L."/>
            <person name="Beck S."/>
            <person name="Smith D.R."/>
            <person name="Rogers J."/>
        </authorList>
    </citation>
    <scope>NUCLEOTIDE SEQUENCE [LARGE SCALE GENOMIC DNA]</scope>
</reference>
<reference key="4">
    <citation type="submission" date="2005-09" db="EMBL/GenBank/DDBJ databases">
        <authorList>
            <person name="Mural R.J."/>
            <person name="Istrail S."/>
            <person name="Sutton G.G."/>
            <person name="Florea L."/>
            <person name="Halpern A.L."/>
            <person name="Mobarry C.M."/>
            <person name="Lippert R."/>
            <person name="Walenz B."/>
            <person name="Shatkay H."/>
            <person name="Dew I."/>
            <person name="Miller J.R."/>
            <person name="Flanigan M.J."/>
            <person name="Edwards N.J."/>
            <person name="Bolanos R."/>
            <person name="Fasulo D."/>
            <person name="Halldorsson B.V."/>
            <person name="Hannenhalli S."/>
            <person name="Turner R."/>
            <person name="Yooseph S."/>
            <person name="Lu F."/>
            <person name="Nusskern D.R."/>
            <person name="Shue B.C."/>
            <person name="Zheng X.H."/>
            <person name="Zhong F."/>
            <person name="Delcher A.L."/>
            <person name="Huson D.H."/>
            <person name="Kravitz S.A."/>
            <person name="Mouchard L."/>
            <person name="Reinert K."/>
            <person name="Remington K.A."/>
            <person name="Clark A.G."/>
            <person name="Waterman M.S."/>
            <person name="Eichler E.E."/>
            <person name="Adams M.D."/>
            <person name="Hunkapiller M.W."/>
            <person name="Myers E.W."/>
            <person name="Venter J.C."/>
        </authorList>
    </citation>
    <scope>NUCLEOTIDE SEQUENCE [LARGE SCALE GENOMIC DNA]</scope>
</reference>
<reference key="5">
    <citation type="journal article" date="2004" name="Genome Res.">
        <title>The status, quality, and expansion of the NIH full-length cDNA project: the Mammalian Gene Collection (MGC).</title>
        <authorList>
            <consortium name="The MGC Project Team"/>
        </authorList>
    </citation>
    <scope>NUCLEOTIDE SEQUENCE [LARGE SCALE MRNA]</scope>
</reference>
<name>ENTP7_HUMAN</name>
<feature type="chain" id="PRO_0000274419" description="Ectonucleoside triphosphate diphosphohydrolase 7">
    <location>
        <begin position="1"/>
        <end position="604"/>
    </location>
</feature>
<feature type="topological domain" description="Cytoplasmic" evidence="3">
    <location>
        <begin position="1"/>
        <end position="28"/>
    </location>
</feature>
<feature type="transmembrane region" description="Helical" evidence="3">
    <location>
        <begin position="29"/>
        <end position="49"/>
    </location>
</feature>
<feature type="topological domain" description="Vesicular" evidence="3">
    <location>
        <begin position="50"/>
        <end position="546"/>
    </location>
</feature>
<feature type="transmembrane region" description="Helical" evidence="3">
    <location>
        <begin position="547"/>
        <end position="567"/>
    </location>
</feature>
<feature type="topological domain" description="Cytoplasmic" evidence="3">
    <location>
        <begin position="568"/>
        <end position="604"/>
    </location>
</feature>
<feature type="active site" description="Proton acceptor" evidence="2">
    <location>
        <position position="217"/>
    </location>
</feature>
<feature type="glycosylation site" description="N-linked (GlcNAc...) asparagine" evidence="3">
    <location>
        <position position="330"/>
    </location>
</feature>
<feature type="disulfide bond" evidence="1">
    <location>
        <begin position="448"/>
        <end position="477"/>
    </location>
</feature>
<feature type="sequence variant" id="VAR_030287" description="In dbSNP:rs11190245." evidence="5">
    <original>V</original>
    <variation>A</variation>
    <location>
        <position position="276"/>
    </location>
</feature>